<name>Y010_PYRAB</name>
<dbReference type="EMBL" id="AJ248283">
    <property type="protein sequence ID" value="CAB48933.1"/>
    <property type="molecule type" value="Genomic_DNA"/>
</dbReference>
<dbReference type="EMBL" id="HE613800">
    <property type="protein sequence ID" value="CCE69378.1"/>
    <property type="molecule type" value="Genomic_DNA"/>
</dbReference>
<dbReference type="PIR" id="F75185">
    <property type="entry name" value="F75185"/>
</dbReference>
<dbReference type="RefSeq" id="WP_010867133.1">
    <property type="nucleotide sequence ID" value="NC_000868.1"/>
</dbReference>
<dbReference type="SMR" id="Q9V2R5"/>
<dbReference type="STRING" id="272844.PAB0006"/>
<dbReference type="KEGG" id="pab:PAB0006"/>
<dbReference type="PATRIC" id="fig|272844.11.peg.12"/>
<dbReference type="eggNOG" id="arCOG01336">
    <property type="taxonomic scope" value="Archaea"/>
</dbReference>
<dbReference type="HOGENOM" id="CLU_095686_1_1_2"/>
<dbReference type="OrthoDB" id="25187at2157"/>
<dbReference type="PhylomeDB" id="Q9V2R5"/>
<dbReference type="Proteomes" id="UP000000810">
    <property type="component" value="Chromosome"/>
</dbReference>
<dbReference type="Proteomes" id="UP000009139">
    <property type="component" value="Chromosome"/>
</dbReference>
<dbReference type="Gene3D" id="3.30.700.20">
    <property type="entry name" value="Hypothetical protein ph0010, domain 1"/>
    <property type="match status" value="1"/>
</dbReference>
<dbReference type="Gene3D" id="3.30.1490.150">
    <property type="entry name" value="Hypothetical protein ph0010, domain 2"/>
    <property type="match status" value="1"/>
</dbReference>
<dbReference type="HAMAP" id="MF_00645">
    <property type="entry name" value="AMMECR1"/>
    <property type="match status" value="1"/>
</dbReference>
<dbReference type="InterPro" id="IPR023473">
    <property type="entry name" value="AMMECR1"/>
</dbReference>
<dbReference type="InterPro" id="IPR036071">
    <property type="entry name" value="AMMECR1_dom_sf"/>
</dbReference>
<dbReference type="InterPro" id="IPR002733">
    <property type="entry name" value="AMMECR1_domain"/>
</dbReference>
<dbReference type="InterPro" id="IPR027485">
    <property type="entry name" value="AMMECR1_N"/>
</dbReference>
<dbReference type="InterPro" id="IPR027623">
    <property type="entry name" value="AmmeMemoSam_A"/>
</dbReference>
<dbReference type="InterPro" id="IPR023472">
    <property type="entry name" value="Uncharacterised_MJ0810"/>
</dbReference>
<dbReference type="NCBIfam" id="TIGR04335">
    <property type="entry name" value="AmmeMemoSam_A"/>
    <property type="match status" value="1"/>
</dbReference>
<dbReference type="NCBIfam" id="NF002000">
    <property type="entry name" value="PRK00801.1"/>
    <property type="match status" value="1"/>
</dbReference>
<dbReference type="NCBIfam" id="TIGR00296">
    <property type="entry name" value="TIGR00296 family protein"/>
    <property type="match status" value="1"/>
</dbReference>
<dbReference type="PANTHER" id="PTHR13016:SF0">
    <property type="entry name" value="AMME SYNDROME CANDIDATE GENE 1 PROTEIN"/>
    <property type="match status" value="1"/>
</dbReference>
<dbReference type="PANTHER" id="PTHR13016">
    <property type="entry name" value="AMMECR1 HOMOLOG"/>
    <property type="match status" value="1"/>
</dbReference>
<dbReference type="Pfam" id="PF01871">
    <property type="entry name" value="AMMECR1"/>
    <property type="match status" value="1"/>
</dbReference>
<dbReference type="SUPFAM" id="SSF143447">
    <property type="entry name" value="AMMECR1-like"/>
    <property type="match status" value="1"/>
</dbReference>
<dbReference type="PROSITE" id="PS51112">
    <property type="entry name" value="AMMECR1"/>
    <property type="match status" value="1"/>
</dbReference>
<gene>
    <name type="ordered locus">PYRAB00100</name>
    <name type="ORF">PAB0006</name>
</gene>
<sequence>MAKIKDEWGEFLVRLARRAIEEYLKTGKEIEPPKDTPKELWEKMGVFVTLNRHNVPPQTALRGCIGFPLPIYPLVKATIKAAIYSAVDDPRFPPVKLEEMDNIIVEVSVLTPPELIEGPPEERPKKIKVGRDGLIVEKGIYSGLLLPQVPIEWGWDEEEFLAETCWKAGLPPDCWLDEDTKVYRFTAEIFEEEYPRGPVRRKSLV</sequence>
<proteinExistence type="inferred from homology"/>
<evidence type="ECO:0000255" key="1">
    <source>
        <dbReference type="HAMAP-Rule" id="MF_00645"/>
    </source>
</evidence>
<protein>
    <recommendedName>
        <fullName evidence="1">Protein PYRAB00100</fullName>
    </recommendedName>
</protein>
<reference key="1">
    <citation type="journal article" date="2003" name="Mol. Microbiol.">
        <title>An integrated analysis of the genome of the hyperthermophilic archaeon Pyrococcus abyssi.</title>
        <authorList>
            <person name="Cohen G.N."/>
            <person name="Barbe V."/>
            <person name="Flament D."/>
            <person name="Galperin M."/>
            <person name="Heilig R."/>
            <person name="Lecompte O."/>
            <person name="Poch O."/>
            <person name="Prieur D."/>
            <person name="Querellou J."/>
            <person name="Ripp R."/>
            <person name="Thierry J.-C."/>
            <person name="Van der Oost J."/>
            <person name="Weissenbach J."/>
            <person name="Zivanovic Y."/>
            <person name="Forterre P."/>
        </authorList>
    </citation>
    <scope>NUCLEOTIDE SEQUENCE [LARGE SCALE GENOMIC DNA]</scope>
    <source>
        <strain>GE5 / Orsay</strain>
    </source>
</reference>
<reference key="2">
    <citation type="journal article" date="2012" name="Curr. Microbiol.">
        <title>Re-annotation of two hyperthermophilic archaea Pyrococcus abyssi GE5 and Pyrococcus furiosus DSM 3638.</title>
        <authorList>
            <person name="Gao J."/>
            <person name="Wang J."/>
        </authorList>
    </citation>
    <scope>GENOME REANNOTATION</scope>
    <source>
        <strain>GE5 / Orsay</strain>
    </source>
</reference>
<accession>Q9V2R5</accession>
<accession>G8ZFI7</accession>
<feature type="chain" id="PRO_0000142382" description="Protein PYRAB00100">
    <location>
        <begin position="1"/>
        <end position="205"/>
    </location>
</feature>
<feature type="domain" description="AMMECR1" evidence="1">
    <location>
        <begin position="7"/>
        <end position="201"/>
    </location>
</feature>
<organism>
    <name type="scientific">Pyrococcus abyssi (strain GE5 / Orsay)</name>
    <dbReference type="NCBI Taxonomy" id="272844"/>
    <lineage>
        <taxon>Archaea</taxon>
        <taxon>Methanobacteriati</taxon>
        <taxon>Methanobacteriota</taxon>
        <taxon>Thermococci</taxon>
        <taxon>Thermococcales</taxon>
        <taxon>Thermococcaceae</taxon>
        <taxon>Pyrococcus</taxon>
    </lineage>
</organism>